<feature type="chain" id="PRO_0000129487" description="Large ribosomal subunit protein uL23m">
    <location>
        <begin position="1"/>
        <end position="153"/>
    </location>
</feature>
<feature type="region of interest" description="Disordered" evidence="2">
    <location>
        <begin position="110"/>
        <end position="153"/>
    </location>
</feature>
<feature type="compositionally biased region" description="Basic and acidic residues" evidence="2">
    <location>
        <begin position="111"/>
        <end position="146"/>
    </location>
</feature>
<protein>
    <recommendedName>
        <fullName evidence="3">Large ribosomal subunit protein uL23m</fullName>
    </recommendedName>
    <alternativeName>
        <fullName>39S ribosomal protein L23, mitochondrial</fullName>
        <shortName>L23mt</shortName>
        <shortName>MRP-L23</shortName>
    </alternativeName>
</protein>
<sequence length="153" mass="18257">MAKRIIYPLYQLGNPQLRIFRPTFNMTLVRPGKEQPPDTVQFRISMAMTKCDVRNYLEKIYSVPVSAVRTRIQYCSNKKRNHLNQRVKRPDYKVAYVQLAQQQTFQFPDIFPEKDKKSKEGSVEEMHEKFMEDERQRQKPDPRRGGVTEWFGL</sequence>
<evidence type="ECO:0000250" key="1">
    <source>
        <dbReference type="UniProtKB" id="Q16540"/>
    </source>
</evidence>
<evidence type="ECO:0000256" key="2">
    <source>
        <dbReference type="SAM" id="MobiDB-lite"/>
    </source>
</evidence>
<evidence type="ECO:0000305" key="3"/>
<accession>Q6IQS9</accession>
<reference key="1">
    <citation type="submission" date="2004-06" db="EMBL/GenBank/DDBJ databases">
        <authorList>
            <consortium name="NIH - Zebrafish Gene Collection (ZGC) project"/>
        </authorList>
    </citation>
    <scope>NUCLEOTIDE SEQUENCE [LARGE SCALE MRNA]</scope>
    <source>
        <tissue>Embryo</tissue>
    </source>
</reference>
<organism>
    <name type="scientific">Danio rerio</name>
    <name type="common">Zebrafish</name>
    <name type="synonym">Brachydanio rerio</name>
    <dbReference type="NCBI Taxonomy" id="7955"/>
    <lineage>
        <taxon>Eukaryota</taxon>
        <taxon>Metazoa</taxon>
        <taxon>Chordata</taxon>
        <taxon>Craniata</taxon>
        <taxon>Vertebrata</taxon>
        <taxon>Euteleostomi</taxon>
        <taxon>Actinopterygii</taxon>
        <taxon>Neopterygii</taxon>
        <taxon>Teleostei</taxon>
        <taxon>Ostariophysi</taxon>
        <taxon>Cypriniformes</taxon>
        <taxon>Danionidae</taxon>
        <taxon>Danioninae</taxon>
        <taxon>Danio</taxon>
    </lineage>
</organism>
<name>RM23_DANRE</name>
<dbReference type="EMBL" id="BC071325">
    <property type="protein sequence ID" value="AAH71325.1"/>
    <property type="molecule type" value="mRNA"/>
</dbReference>
<dbReference type="RefSeq" id="NP_001002052.1">
    <property type="nucleotide sequence ID" value="NM_001002052.2"/>
</dbReference>
<dbReference type="SMR" id="Q6IQS9"/>
<dbReference type="FunCoup" id="Q6IQS9">
    <property type="interactions" value="278"/>
</dbReference>
<dbReference type="STRING" id="7955.ENSDARP00000067178"/>
<dbReference type="PaxDb" id="7955-ENSDARP00000067178"/>
<dbReference type="Ensembl" id="ENSDART00000067179">
    <property type="protein sequence ID" value="ENSDARP00000067178"/>
    <property type="gene ID" value="ENSDARG00000045696"/>
</dbReference>
<dbReference type="Ensembl" id="ENSDART00000169618">
    <property type="protein sequence ID" value="ENSDARP00000137414"/>
    <property type="gene ID" value="ENSDARG00000111947"/>
</dbReference>
<dbReference type="GeneID" id="415142"/>
<dbReference type="KEGG" id="dre:415142"/>
<dbReference type="AGR" id="ZFIN:ZDB-GENE-040625-12"/>
<dbReference type="CTD" id="6150"/>
<dbReference type="ZFIN" id="ZDB-GENE-040625-12">
    <property type="gene designation" value="mrpl23"/>
</dbReference>
<dbReference type="eggNOG" id="KOG4089">
    <property type="taxonomic scope" value="Eukaryota"/>
</dbReference>
<dbReference type="HOGENOM" id="CLU_103097_1_0_1"/>
<dbReference type="InParanoid" id="Q6IQS9"/>
<dbReference type="OMA" id="PNFWLKL"/>
<dbReference type="OrthoDB" id="275582at2759"/>
<dbReference type="PhylomeDB" id="Q6IQS9"/>
<dbReference type="TreeFam" id="TF105852"/>
<dbReference type="Reactome" id="R-DRE-5389840">
    <property type="pathway name" value="Mitochondrial translation elongation"/>
</dbReference>
<dbReference type="Reactome" id="R-DRE-5419276">
    <property type="pathway name" value="Mitochondrial translation termination"/>
</dbReference>
<dbReference type="ChiTaRS" id="mrpl23">
    <property type="organism name" value="zebrafish"/>
</dbReference>
<dbReference type="PRO" id="PR:Q6IQS9"/>
<dbReference type="Proteomes" id="UP000000437">
    <property type="component" value="Alternate scaffold 25"/>
</dbReference>
<dbReference type="Proteomes" id="UP000000437">
    <property type="component" value="Chromosome 25"/>
</dbReference>
<dbReference type="Bgee" id="ENSDARG00000045696">
    <property type="expression patterns" value="Expressed in somite and 27 other cell types or tissues"/>
</dbReference>
<dbReference type="ExpressionAtlas" id="Q6IQS9">
    <property type="expression patterns" value="baseline"/>
</dbReference>
<dbReference type="GO" id="GO:0005762">
    <property type="term" value="C:mitochondrial large ribosomal subunit"/>
    <property type="evidence" value="ECO:0000250"/>
    <property type="project" value="UniProtKB"/>
</dbReference>
<dbReference type="GO" id="GO:0003735">
    <property type="term" value="F:structural constituent of ribosome"/>
    <property type="evidence" value="ECO:0000318"/>
    <property type="project" value="GO_Central"/>
</dbReference>
<dbReference type="GO" id="GO:0032543">
    <property type="term" value="P:mitochondrial translation"/>
    <property type="evidence" value="ECO:0000318"/>
    <property type="project" value="GO_Central"/>
</dbReference>
<dbReference type="FunFam" id="3.30.70.330:FF:000284">
    <property type="entry name" value="39S ribosomal protein L23, mitochondrial"/>
    <property type="match status" value="1"/>
</dbReference>
<dbReference type="Gene3D" id="3.30.70.330">
    <property type="match status" value="1"/>
</dbReference>
<dbReference type="InterPro" id="IPR012677">
    <property type="entry name" value="Nucleotide-bd_a/b_plait_sf"/>
</dbReference>
<dbReference type="InterPro" id="IPR013025">
    <property type="entry name" value="Ribosomal_uL23-like"/>
</dbReference>
<dbReference type="InterPro" id="IPR012678">
    <property type="entry name" value="Ribosomal_uL23/eL15/eS24_sf"/>
</dbReference>
<dbReference type="PANTHER" id="PTHR12059:SF5">
    <property type="entry name" value="LARGE RIBOSOMAL SUBUNIT PROTEIN UL23M"/>
    <property type="match status" value="1"/>
</dbReference>
<dbReference type="PANTHER" id="PTHR12059">
    <property type="entry name" value="RIBOSOMAL PROTEIN L23-RELATED"/>
    <property type="match status" value="1"/>
</dbReference>
<dbReference type="Pfam" id="PF00276">
    <property type="entry name" value="Ribosomal_L23"/>
    <property type="match status" value="1"/>
</dbReference>
<dbReference type="SUPFAM" id="SSF54189">
    <property type="entry name" value="Ribosomal proteins S24e, L23 and L15e"/>
    <property type="match status" value="1"/>
</dbReference>
<gene>
    <name type="primary">mrpl23</name>
    <name type="ORF">zgc:86630</name>
</gene>
<keyword id="KW-0496">Mitochondrion</keyword>
<keyword id="KW-1185">Reference proteome</keyword>
<keyword id="KW-0687">Ribonucleoprotein</keyword>
<keyword id="KW-0689">Ribosomal protein</keyword>
<proteinExistence type="evidence at transcript level"/>
<comment type="subunit">
    <text evidence="1">Component of the mitochondrial ribosome large subunit (39S) which comprises a 16S rRNA and about 50 distinct proteins.</text>
</comment>
<comment type="subcellular location">
    <subcellularLocation>
        <location evidence="1">Mitochondrion</location>
    </subcellularLocation>
</comment>
<comment type="similarity">
    <text evidence="3">Belongs to the universal ribosomal protein uL23 family.</text>
</comment>